<proteinExistence type="inferred from homology"/>
<dbReference type="EMBL" id="AY849600">
    <property type="protein sequence ID" value="AAW45733.1"/>
    <property type="molecule type" value="Genomic_DNA"/>
</dbReference>
<dbReference type="GO" id="GO:0009507">
    <property type="term" value="C:chloroplast"/>
    <property type="evidence" value="ECO:0007669"/>
    <property type="project" value="UniProtKB-UniRule"/>
</dbReference>
<dbReference type="GO" id="GO:0003723">
    <property type="term" value="F:RNA binding"/>
    <property type="evidence" value="ECO:0007669"/>
    <property type="project" value="UniProtKB-KW"/>
</dbReference>
<dbReference type="GO" id="GO:0006397">
    <property type="term" value="P:mRNA processing"/>
    <property type="evidence" value="ECO:0007669"/>
    <property type="project" value="UniProtKB-KW"/>
</dbReference>
<dbReference type="GO" id="GO:0008380">
    <property type="term" value="P:RNA splicing"/>
    <property type="evidence" value="ECO:0007669"/>
    <property type="project" value="UniProtKB-UniRule"/>
</dbReference>
<dbReference type="GO" id="GO:0008033">
    <property type="term" value="P:tRNA processing"/>
    <property type="evidence" value="ECO:0007669"/>
    <property type="project" value="UniProtKB-KW"/>
</dbReference>
<dbReference type="HAMAP" id="MF_01390">
    <property type="entry name" value="MatK"/>
    <property type="match status" value="1"/>
</dbReference>
<dbReference type="InterPro" id="IPR024937">
    <property type="entry name" value="Domain_X"/>
</dbReference>
<dbReference type="InterPro" id="IPR002866">
    <property type="entry name" value="Maturase_MatK"/>
</dbReference>
<dbReference type="InterPro" id="IPR024942">
    <property type="entry name" value="Maturase_MatK_N"/>
</dbReference>
<dbReference type="PANTHER" id="PTHR34811">
    <property type="entry name" value="MATURASE K"/>
    <property type="match status" value="1"/>
</dbReference>
<dbReference type="PANTHER" id="PTHR34811:SF1">
    <property type="entry name" value="MATURASE K"/>
    <property type="match status" value="1"/>
</dbReference>
<dbReference type="Pfam" id="PF01348">
    <property type="entry name" value="Intron_maturas2"/>
    <property type="match status" value="1"/>
</dbReference>
<dbReference type="Pfam" id="PF01824">
    <property type="entry name" value="MatK_N"/>
    <property type="match status" value="1"/>
</dbReference>
<geneLocation type="non-photosynthetic plastid"/>
<gene>
    <name evidence="1" type="primary">matK</name>
</gene>
<name>MATK_BARAL</name>
<evidence type="ECO:0000255" key="1">
    <source>
        <dbReference type="HAMAP-Rule" id="MF_01390"/>
    </source>
</evidence>
<protein>
    <recommendedName>
        <fullName evidence="1">Maturase K</fullName>
    </recommendedName>
    <alternativeName>
        <fullName evidence="1">Intron maturase</fullName>
    </alternativeName>
</protein>
<comment type="function">
    <text evidence="1">Usually encoded in the trnK tRNA gene intron. Probably assists in splicing its own and other chloroplast group II introns.</text>
</comment>
<comment type="subcellular location">
    <subcellularLocation>
        <location>Plastid</location>
    </subcellularLocation>
</comment>
<comment type="similarity">
    <text evidence="1">Belongs to the intron maturase 2 family. MatK subfamily.</text>
</comment>
<accession>Q5I6K6</accession>
<reference key="1">
    <citation type="journal article" date="2005" name="BMC Evol. Biol.">
        <title>Rate variation in parasitic plants: correlated and uncorrelated patterns among plastid genes of different function.</title>
        <authorList>
            <person name="Young N.D."/>
            <person name="dePamphilis C.W."/>
        </authorList>
    </citation>
    <scope>NUCLEOTIDE SEQUENCE [GENOMIC DNA]</scope>
</reference>
<sequence>MEEIRRYLQLERSQQHDFLYPLIFQEYIYAFAHDRGFSRSILLENENPGYDNKSSLLVMKRLITRMYQQNHFLISPNDFNQKNPFFAHNKNLYSQIIAEGFAFIVEIPFSLRLISEGKKKKIVKSQNLRSIHSIFPFLEDNFSYLNFVLDILIPHPVHVEILVQTLRYWVKDASSLHLLRFFLNKYWNSLITPKKASSSFSTRNQRLFVFLYNSHVSEYESSFVFLRNQSSHLGSTPFGVLLERIYFYGKIERLVNVFVKVKDFRANLWLVKEPCIHYIRYQRKFILASKGTSLFMNKWKCYLITFWQWHFSLWFYPRRIYINQLSNHSFAFLGYLSSLRMNPSVVRSQSLENAFLINNAIKKVDTLVPIIPMIASLAKAKFCNVFGHPISKPVRADLSDSNIIDRFGCICRNFSHYYSGSSKKKSLYRIKYILRLSCARTLARKHKSTVRTFLKKLGSELLEEFLLSEEDVLFLTFPKASPSLQGVYRSRIWYLDIISINDLVDHKSKF</sequence>
<organism>
    <name type="scientific">Bartsia alpina</name>
    <name type="common">Velvet bells</name>
    <dbReference type="NCBI Taxonomy" id="46052"/>
    <lineage>
        <taxon>Eukaryota</taxon>
        <taxon>Viridiplantae</taxon>
        <taxon>Streptophyta</taxon>
        <taxon>Embryophyta</taxon>
        <taxon>Tracheophyta</taxon>
        <taxon>Spermatophyta</taxon>
        <taxon>Magnoliopsida</taxon>
        <taxon>eudicotyledons</taxon>
        <taxon>Gunneridae</taxon>
        <taxon>Pentapetalae</taxon>
        <taxon>asterids</taxon>
        <taxon>lamiids</taxon>
        <taxon>Lamiales</taxon>
        <taxon>Orobanchaceae</taxon>
        <taxon>Rhinantheae</taxon>
        <taxon>Bartsia</taxon>
    </lineage>
</organism>
<keyword id="KW-0507">mRNA processing</keyword>
<keyword id="KW-0934">Plastid</keyword>
<keyword id="KW-0694">RNA-binding</keyword>
<keyword id="KW-0819">tRNA processing</keyword>
<feature type="chain" id="PRO_0000143278" description="Maturase K">
    <location>
        <begin position="1"/>
        <end position="510"/>
    </location>
</feature>